<sequence length="328" mass="35300">MIRVAIDLMGGDRAPGEILEGARLFSRKDCKLFLVGTKEALANATGFEKVEVSDFLPMDVKPTEILRRKTSSMYIGLKLLKEGAVDVFISAGNTGALLAGATFILGRIHGVERPALAVPVPSLNGFTVLIDAGANVRSRPEHLVDFAVMGLSYAKVLGREKPSIGLLNVGEEETKGDETTRETYELLKRYFPDFFIGNVEGHDLNTGKADVVVTEGFSGNVAMKTMEGTAKMILDTLKSEVKKAGFVQKIGALLMKKVFSSLKKALDPRSYGGAFILGVNGLVVKAHGSSDRLAIQNALEVARVGAEMKIVESIEGEIKRVRDSGADR</sequence>
<reference key="1">
    <citation type="submission" date="2007-08" db="EMBL/GenBank/DDBJ databases">
        <title>Complete sequence of Thermotoga lettingae TMO.</title>
        <authorList>
            <consortium name="US DOE Joint Genome Institute"/>
            <person name="Copeland A."/>
            <person name="Lucas S."/>
            <person name="Lapidus A."/>
            <person name="Barry K."/>
            <person name="Glavina del Rio T."/>
            <person name="Dalin E."/>
            <person name="Tice H."/>
            <person name="Pitluck S."/>
            <person name="Foster B."/>
            <person name="Bruce D."/>
            <person name="Schmutz J."/>
            <person name="Larimer F."/>
            <person name="Land M."/>
            <person name="Hauser L."/>
            <person name="Kyrpides N."/>
            <person name="Mikhailova N."/>
            <person name="Nelson K."/>
            <person name="Gogarten J.P."/>
            <person name="Noll K."/>
            <person name="Richardson P."/>
        </authorList>
    </citation>
    <scope>NUCLEOTIDE SEQUENCE [LARGE SCALE GENOMIC DNA]</scope>
    <source>
        <strain>ATCC BAA-301 / DSM 14385 / NBRC 107922 / TMO</strain>
    </source>
</reference>
<evidence type="ECO:0000255" key="1">
    <source>
        <dbReference type="HAMAP-Rule" id="MF_00019"/>
    </source>
</evidence>
<name>PLSX_PSELT</name>
<proteinExistence type="inferred from homology"/>
<feature type="chain" id="PRO_1000057181" description="Phosphate acyltransferase">
    <location>
        <begin position="1"/>
        <end position="328"/>
    </location>
</feature>
<gene>
    <name evidence="1" type="primary">plsX</name>
    <name type="ordered locus">Tlet_1894</name>
</gene>
<accession>A8F8G4</accession>
<comment type="function">
    <text evidence="1">Catalyzes the reversible formation of acyl-phosphate (acyl-PO(4)) from acyl-[acyl-carrier-protein] (acyl-ACP). This enzyme utilizes acyl-ACP as fatty acyl donor, but not acyl-CoA.</text>
</comment>
<comment type="catalytic activity">
    <reaction evidence="1">
        <text>a fatty acyl-[ACP] + phosphate = an acyl phosphate + holo-[ACP]</text>
        <dbReference type="Rhea" id="RHEA:42292"/>
        <dbReference type="Rhea" id="RHEA-COMP:9685"/>
        <dbReference type="Rhea" id="RHEA-COMP:14125"/>
        <dbReference type="ChEBI" id="CHEBI:43474"/>
        <dbReference type="ChEBI" id="CHEBI:59918"/>
        <dbReference type="ChEBI" id="CHEBI:64479"/>
        <dbReference type="ChEBI" id="CHEBI:138651"/>
        <dbReference type="EC" id="2.3.1.274"/>
    </reaction>
</comment>
<comment type="pathway">
    <text evidence="1">Lipid metabolism; phospholipid metabolism.</text>
</comment>
<comment type="subunit">
    <text evidence="1">Homodimer. Probably interacts with PlsY.</text>
</comment>
<comment type="subcellular location">
    <subcellularLocation>
        <location evidence="1">Cytoplasm</location>
    </subcellularLocation>
    <text evidence="1">Associated with the membrane possibly through PlsY.</text>
</comment>
<comment type="similarity">
    <text evidence="1">Belongs to the PlsX family.</text>
</comment>
<organism>
    <name type="scientific">Pseudothermotoga lettingae (strain ATCC BAA-301 / DSM 14385 / NBRC 107922 / TMO)</name>
    <name type="common">Thermotoga lettingae</name>
    <dbReference type="NCBI Taxonomy" id="416591"/>
    <lineage>
        <taxon>Bacteria</taxon>
        <taxon>Thermotogati</taxon>
        <taxon>Thermotogota</taxon>
        <taxon>Thermotogae</taxon>
        <taxon>Thermotogales</taxon>
        <taxon>Thermotogaceae</taxon>
        <taxon>Pseudothermotoga</taxon>
    </lineage>
</organism>
<protein>
    <recommendedName>
        <fullName evidence="1">Phosphate acyltransferase</fullName>
        <ecNumber evidence="1">2.3.1.274</ecNumber>
    </recommendedName>
    <alternativeName>
        <fullName evidence="1">Acyl-ACP phosphotransacylase</fullName>
    </alternativeName>
    <alternativeName>
        <fullName evidence="1">Acyl-[acyl-carrier-protein]--phosphate acyltransferase</fullName>
    </alternativeName>
    <alternativeName>
        <fullName evidence="1">Phosphate-acyl-ACP acyltransferase</fullName>
    </alternativeName>
</protein>
<keyword id="KW-0963">Cytoplasm</keyword>
<keyword id="KW-0444">Lipid biosynthesis</keyword>
<keyword id="KW-0443">Lipid metabolism</keyword>
<keyword id="KW-0594">Phospholipid biosynthesis</keyword>
<keyword id="KW-1208">Phospholipid metabolism</keyword>
<keyword id="KW-1185">Reference proteome</keyword>
<keyword id="KW-0808">Transferase</keyword>
<dbReference type="EC" id="2.3.1.274" evidence="1"/>
<dbReference type="EMBL" id="CP000812">
    <property type="protein sequence ID" value="ABV34448.1"/>
    <property type="molecule type" value="Genomic_DNA"/>
</dbReference>
<dbReference type="RefSeq" id="WP_012003924.1">
    <property type="nucleotide sequence ID" value="NZ_BSDV01000001.1"/>
</dbReference>
<dbReference type="SMR" id="A8F8G4"/>
<dbReference type="STRING" id="416591.Tlet_1894"/>
<dbReference type="KEGG" id="tle:Tlet_1894"/>
<dbReference type="eggNOG" id="COG0416">
    <property type="taxonomic scope" value="Bacteria"/>
</dbReference>
<dbReference type="HOGENOM" id="CLU_039379_1_1_0"/>
<dbReference type="OrthoDB" id="9806408at2"/>
<dbReference type="UniPathway" id="UPA00085"/>
<dbReference type="Proteomes" id="UP000002016">
    <property type="component" value="Chromosome"/>
</dbReference>
<dbReference type="GO" id="GO:0005737">
    <property type="term" value="C:cytoplasm"/>
    <property type="evidence" value="ECO:0007669"/>
    <property type="project" value="UniProtKB-SubCell"/>
</dbReference>
<dbReference type="GO" id="GO:0043811">
    <property type="term" value="F:phosphate:acyl-[acyl carrier protein] acyltransferase activity"/>
    <property type="evidence" value="ECO:0007669"/>
    <property type="project" value="UniProtKB-UniRule"/>
</dbReference>
<dbReference type="GO" id="GO:0006633">
    <property type="term" value="P:fatty acid biosynthetic process"/>
    <property type="evidence" value="ECO:0007669"/>
    <property type="project" value="UniProtKB-UniRule"/>
</dbReference>
<dbReference type="GO" id="GO:0008654">
    <property type="term" value="P:phospholipid biosynthetic process"/>
    <property type="evidence" value="ECO:0007669"/>
    <property type="project" value="UniProtKB-KW"/>
</dbReference>
<dbReference type="Gene3D" id="3.40.718.10">
    <property type="entry name" value="Isopropylmalate Dehydrogenase"/>
    <property type="match status" value="1"/>
</dbReference>
<dbReference type="HAMAP" id="MF_00019">
    <property type="entry name" value="PlsX"/>
    <property type="match status" value="1"/>
</dbReference>
<dbReference type="InterPro" id="IPR003664">
    <property type="entry name" value="FA_synthesis"/>
</dbReference>
<dbReference type="InterPro" id="IPR012281">
    <property type="entry name" value="Phospholipid_synth_PlsX-like"/>
</dbReference>
<dbReference type="NCBIfam" id="TIGR00182">
    <property type="entry name" value="plsX"/>
    <property type="match status" value="1"/>
</dbReference>
<dbReference type="PANTHER" id="PTHR30100">
    <property type="entry name" value="FATTY ACID/PHOSPHOLIPID SYNTHESIS PROTEIN PLSX"/>
    <property type="match status" value="1"/>
</dbReference>
<dbReference type="PANTHER" id="PTHR30100:SF1">
    <property type="entry name" value="PHOSPHATE ACYLTRANSFERASE"/>
    <property type="match status" value="1"/>
</dbReference>
<dbReference type="Pfam" id="PF02504">
    <property type="entry name" value="FA_synthesis"/>
    <property type="match status" value="1"/>
</dbReference>
<dbReference type="PIRSF" id="PIRSF002465">
    <property type="entry name" value="Phsphlp_syn_PlsX"/>
    <property type="match status" value="1"/>
</dbReference>
<dbReference type="SUPFAM" id="SSF53659">
    <property type="entry name" value="Isocitrate/Isopropylmalate dehydrogenase-like"/>
    <property type="match status" value="1"/>
</dbReference>